<protein>
    <recommendedName>
        <fullName>Zinc finger protein 750</fullName>
    </recommendedName>
</protein>
<keyword id="KW-0002">3D-structure</keyword>
<keyword id="KW-0010">Activator</keyword>
<keyword id="KW-0221">Differentiation</keyword>
<keyword id="KW-0479">Metal-binding</keyword>
<keyword id="KW-0539">Nucleus</keyword>
<keyword id="KW-1267">Proteomics identification</keyword>
<keyword id="KW-1185">Reference proteome</keyword>
<keyword id="KW-0804">Transcription</keyword>
<keyword id="KW-0805">Transcription regulation</keyword>
<keyword id="KW-0862">Zinc</keyword>
<keyword id="KW-0863">Zinc-finger</keyword>
<proteinExistence type="evidence at protein level"/>
<accession>Q32MQ0</accession>
<accession>Q9H899</accession>
<sequence>MSLLKERKPKKPHYIPRPPGKPFKYKCFQCPFTCNEKSHLFNHMKYGLCKNSITLVSEQDRVPKCPKSNSLDPKQTNQPDATAKPASSKSVANGLSAFDSKLQHSSAREDIKENLELQARGTHRCLGQKPALHRASPCKSPAPEAALGAQPALEGAARPSAFVPVGEHRLKGPDNAEAPETLALHNPTAKAVSFHTKSAFHTPGYPWKAGSPFLPPEFPHKISSTKGLGAISPYMHPTIPEYPPHFYTEHGLATIYSPYLLAGSSPECDAPLLSVYGTQDPRHFLPHPGPIPKHLAPSPATYDHYRFFQQYPSNLPIPYGFYRPESAFSSYGLRLPPVTGLTRDQSSHLLEEATLVYPASSPSRLNPSDPNRKHVEFESPIPEAKDSSKAGQRDTEGSKMSPRAGSAATGSPGRPSPTDFMQTSQTCEGLYDLSNKAASSALGRLYPPEQSLTAFRPVKKSTECLPAQAAETTAESPVSLNVVNGDPPAPTGSASLVSEAAPSSPDDSSGMGPLNLSKKSEINLAATHEPTYQGSPQAETASFSELQDLPLNLSVKDPCNTQAPRPAFPGRPRAAEPAAAVPQKTGTEGSEDGPSHPETKPGSLDGDGAPPTGPGEEAPDACAVDSSEEQKQTAAVALCQLAAYSPRNIRVGDGDAAAPEPACRQDTPTLSSMESQEAQCDLRPKGQKRTSLRDAGKSQQGAKKAKLQDTARVFTLRRRARVS</sequence>
<comment type="function">
    <text evidence="3">Transcription factor involved in epidermis differentiation. Required for terminal epidermal differentiation: acts downstream of p63/TP63 and activates expression of late epidermal differentiation genes. Specifically binds to the promoter of KLF4 and promotes its expression.</text>
</comment>
<comment type="interaction">
    <interactant intactId="EBI-10240029">
        <id>Q32MQ0</id>
    </interactant>
    <interactant intactId="EBI-741533">
        <id>P56545</id>
        <label>CTBP2</label>
    </interactant>
    <organismsDiffer>false</organismsDiffer>
    <experiments>3</experiments>
</comment>
<comment type="subcellular location">
    <subcellularLocation>
        <location evidence="3">Nucleus</location>
    </subcellularLocation>
</comment>
<comment type="tissue specificity">
    <text evidence="2">Expressed in the skin, prostate, lung, placenta and thymus, and at low level in T-cells. Not expressed in peripheral blood leukocytes, pancreas and brain. Clearly expressed in primary keratinocytes but not in fibroblasts.</text>
</comment>
<comment type="induction">
    <text evidence="3">During epidermal differentiation: expression is activated by p63/TP63.</text>
</comment>
<comment type="disease" evidence="2">
    <disease id="DI-02292">
        <name>Seborrhea-like dermatitis with psoriasiform elements</name>
        <acronym>SLDP</acronym>
        <description>Characterized by a chronic fine diffuse scaly erythematous rash on the face, particularly on the chin, nasolabial folds and eyebrows, around earlobes and over the scalp. The rash exacerbate in the winter, with emotional stress and after strenuous physical activity. Hyperkeratosis of skin over the elbows, knees, palms, soles and metacarpophalangeal joints is evident. There is no arthralgia, arthritis or neurological disorders.</description>
        <dbReference type="MIM" id="610227"/>
    </disease>
    <text>The disease is caused by variants affecting the gene represented in this entry.</text>
</comment>
<reference key="1">
    <citation type="journal article" date="2004" name="Nat. Genet.">
        <title>Complete sequencing and characterization of 21,243 full-length human cDNAs.</title>
        <authorList>
            <person name="Ota T."/>
            <person name="Suzuki Y."/>
            <person name="Nishikawa T."/>
            <person name="Otsuki T."/>
            <person name="Sugiyama T."/>
            <person name="Irie R."/>
            <person name="Wakamatsu A."/>
            <person name="Hayashi K."/>
            <person name="Sato H."/>
            <person name="Nagai K."/>
            <person name="Kimura K."/>
            <person name="Makita H."/>
            <person name="Sekine M."/>
            <person name="Obayashi M."/>
            <person name="Nishi T."/>
            <person name="Shibahara T."/>
            <person name="Tanaka T."/>
            <person name="Ishii S."/>
            <person name="Yamamoto J."/>
            <person name="Saito K."/>
            <person name="Kawai Y."/>
            <person name="Isono Y."/>
            <person name="Nakamura Y."/>
            <person name="Nagahari K."/>
            <person name="Murakami K."/>
            <person name="Yasuda T."/>
            <person name="Iwayanagi T."/>
            <person name="Wagatsuma M."/>
            <person name="Shiratori A."/>
            <person name="Sudo H."/>
            <person name="Hosoiri T."/>
            <person name="Kaku Y."/>
            <person name="Kodaira H."/>
            <person name="Kondo H."/>
            <person name="Sugawara M."/>
            <person name="Takahashi M."/>
            <person name="Kanda K."/>
            <person name="Yokoi T."/>
            <person name="Furuya T."/>
            <person name="Kikkawa E."/>
            <person name="Omura Y."/>
            <person name="Abe K."/>
            <person name="Kamihara K."/>
            <person name="Katsuta N."/>
            <person name="Sato K."/>
            <person name="Tanikawa M."/>
            <person name="Yamazaki M."/>
            <person name="Ninomiya K."/>
            <person name="Ishibashi T."/>
            <person name="Yamashita H."/>
            <person name="Murakawa K."/>
            <person name="Fujimori K."/>
            <person name="Tanai H."/>
            <person name="Kimata M."/>
            <person name="Watanabe M."/>
            <person name="Hiraoka S."/>
            <person name="Chiba Y."/>
            <person name="Ishida S."/>
            <person name="Ono Y."/>
            <person name="Takiguchi S."/>
            <person name="Watanabe S."/>
            <person name="Yosida M."/>
            <person name="Hotuta T."/>
            <person name="Kusano J."/>
            <person name="Kanehori K."/>
            <person name="Takahashi-Fujii A."/>
            <person name="Hara H."/>
            <person name="Tanase T.-O."/>
            <person name="Nomura Y."/>
            <person name="Togiya S."/>
            <person name="Komai F."/>
            <person name="Hara R."/>
            <person name="Takeuchi K."/>
            <person name="Arita M."/>
            <person name="Imose N."/>
            <person name="Musashino K."/>
            <person name="Yuuki H."/>
            <person name="Oshima A."/>
            <person name="Sasaki N."/>
            <person name="Aotsuka S."/>
            <person name="Yoshikawa Y."/>
            <person name="Matsunawa H."/>
            <person name="Ichihara T."/>
            <person name="Shiohata N."/>
            <person name="Sano S."/>
            <person name="Moriya S."/>
            <person name="Momiyama H."/>
            <person name="Satoh N."/>
            <person name="Takami S."/>
            <person name="Terashima Y."/>
            <person name="Suzuki O."/>
            <person name="Nakagawa S."/>
            <person name="Senoh A."/>
            <person name="Mizoguchi H."/>
            <person name="Goto Y."/>
            <person name="Shimizu F."/>
            <person name="Wakebe H."/>
            <person name="Hishigaki H."/>
            <person name="Watanabe T."/>
            <person name="Sugiyama A."/>
            <person name="Takemoto M."/>
            <person name="Kawakami B."/>
            <person name="Yamazaki M."/>
            <person name="Watanabe K."/>
            <person name="Kumagai A."/>
            <person name="Itakura S."/>
            <person name="Fukuzumi Y."/>
            <person name="Fujimori Y."/>
            <person name="Komiyama M."/>
            <person name="Tashiro H."/>
            <person name="Tanigami A."/>
            <person name="Fujiwara T."/>
            <person name="Ono T."/>
            <person name="Yamada K."/>
            <person name="Fujii Y."/>
            <person name="Ozaki K."/>
            <person name="Hirao M."/>
            <person name="Ohmori Y."/>
            <person name="Kawabata A."/>
            <person name="Hikiji T."/>
            <person name="Kobatake N."/>
            <person name="Inagaki H."/>
            <person name="Ikema Y."/>
            <person name="Okamoto S."/>
            <person name="Okitani R."/>
            <person name="Kawakami T."/>
            <person name="Noguchi S."/>
            <person name="Itoh T."/>
            <person name="Shigeta K."/>
            <person name="Senba T."/>
            <person name="Matsumura K."/>
            <person name="Nakajima Y."/>
            <person name="Mizuno T."/>
            <person name="Morinaga M."/>
            <person name="Sasaki M."/>
            <person name="Togashi T."/>
            <person name="Oyama M."/>
            <person name="Hata H."/>
            <person name="Watanabe M."/>
            <person name="Komatsu T."/>
            <person name="Mizushima-Sugano J."/>
            <person name="Satoh T."/>
            <person name="Shirai Y."/>
            <person name="Takahashi Y."/>
            <person name="Nakagawa K."/>
            <person name="Okumura K."/>
            <person name="Nagase T."/>
            <person name="Nomura N."/>
            <person name="Kikuchi H."/>
            <person name="Masuho Y."/>
            <person name="Yamashita R."/>
            <person name="Nakai K."/>
            <person name="Yada T."/>
            <person name="Nakamura Y."/>
            <person name="Ohara O."/>
            <person name="Isogai T."/>
            <person name="Sugano S."/>
        </authorList>
    </citation>
    <scope>NUCLEOTIDE SEQUENCE [LARGE SCALE MRNA]</scope>
    <source>
        <tissue>Thyroid</tissue>
    </source>
</reference>
<reference key="2">
    <citation type="journal article" date="2006" name="Nature">
        <title>DNA sequence of human chromosome 17 and analysis of rearrangement in the human lineage.</title>
        <authorList>
            <person name="Zody M.C."/>
            <person name="Garber M."/>
            <person name="Adams D.J."/>
            <person name="Sharpe T."/>
            <person name="Harrow J."/>
            <person name="Lupski J.R."/>
            <person name="Nicholson C."/>
            <person name="Searle S.M."/>
            <person name="Wilming L."/>
            <person name="Young S.K."/>
            <person name="Abouelleil A."/>
            <person name="Allen N.R."/>
            <person name="Bi W."/>
            <person name="Bloom T."/>
            <person name="Borowsky M.L."/>
            <person name="Bugalter B.E."/>
            <person name="Butler J."/>
            <person name="Chang J.L."/>
            <person name="Chen C.-K."/>
            <person name="Cook A."/>
            <person name="Corum B."/>
            <person name="Cuomo C.A."/>
            <person name="de Jong P.J."/>
            <person name="DeCaprio D."/>
            <person name="Dewar K."/>
            <person name="FitzGerald M."/>
            <person name="Gilbert J."/>
            <person name="Gibson R."/>
            <person name="Gnerre S."/>
            <person name="Goldstein S."/>
            <person name="Grafham D.V."/>
            <person name="Grocock R."/>
            <person name="Hafez N."/>
            <person name="Hagopian D.S."/>
            <person name="Hart E."/>
            <person name="Norman C.H."/>
            <person name="Humphray S."/>
            <person name="Jaffe D.B."/>
            <person name="Jones M."/>
            <person name="Kamal M."/>
            <person name="Khodiyar V.K."/>
            <person name="LaButti K."/>
            <person name="Laird G."/>
            <person name="Lehoczky J."/>
            <person name="Liu X."/>
            <person name="Lokyitsang T."/>
            <person name="Loveland J."/>
            <person name="Lui A."/>
            <person name="Macdonald P."/>
            <person name="Major J.E."/>
            <person name="Matthews L."/>
            <person name="Mauceli E."/>
            <person name="McCarroll S.A."/>
            <person name="Mihalev A.H."/>
            <person name="Mudge J."/>
            <person name="Nguyen C."/>
            <person name="Nicol R."/>
            <person name="O'Leary S.B."/>
            <person name="Osoegawa K."/>
            <person name="Schwartz D.C."/>
            <person name="Shaw-Smith C."/>
            <person name="Stankiewicz P."/>
            <person name="Steward C."/>
            <person name="Swarbreck D."/>
            <person name="Venkataraman V."/>
            <person name="Whittaker C.A."/>
            <person name="Yang X."/>
            <person name="Zimmer A.R."/>
            <person name="Bradley A."/>
            <person name="Hubbard T."/>
            <person name="Birren B.W."/>
            <person name="Rogers J."/>
            <person name="Lander E.S."/>
            <person name="Nusbaum C."/>
        </authorList>
    </citation>
    <scope>NUCLEOTIDE SEQUENCE [LARGE SCALE GENOMIC DNA]</scope>
</reference>
<reference key="3">
    <citation type="journal article" date="2004" name="Genome Res.">
        <title>The status, quality, and expansion of the NIH full-length cDNA project: the Mammalian Gene Collection (MGC).</title>
        <authorList>
            <consortium name="The MGC Project Team"/>
        </authorList>
    </citation>
    <scope>NUCLEOTIDE SEQUENCE [LARGE SCALE MRNA]</scope>
</reference>
<reference key="4">
    <citation type="journal article" date="2006" name="Nat. Genet.">
        <title>Seborrhea-like dermatitis with psoriasiform elements caused by a mutation in ZNF750, encoding a putative C2H2 zinc finger protein.</title>
        <authorList>
            <person name="Birnbaum R.Y."/>
            <person name="Zvulunov A."/>
            <person name="Hallel-Halevy D."/>
            <person name="Cagnano E."/>
            <person name="Finer G."/>
            <person name="Ofir R."/>
            <person name="Geiger D."/>
            <person name="Silberstein E."/>
            <person name="Feferman Y."/>
            <person name="Birk O.S."/>
        </authorList>
    </citation>
    <scope>INVOLVEMENT IN SLDP</scope>
    <scope>TISSUE SPECIFICITY</scope>
</reference>
<reference key="5">
    <citation type="journal article" date="2012" name="Dev. Cell">
        <title>ZNF750 is a p63 target gene that induces KLF4 to drive terminal epidermal differentiation.</title>
        <authorList>
            <person name="Sen G.L."/>
            <person name="Boxer L.D."/>
            <person name="Webster D.E."/>
            <person name="Bussat R.T."/>
            <person name="Qu K."/>
            <person name="Zarnegar B.J."/>
            <person name="Johnston D."/>
            <person name="Siprashvili Z."/>
            <person name="Khavari P.A."/>
        </authorList>
    </citation>
    <scope>FUNCTION</scope>
    <scope>SUBCELLULAR LOCATION</scope>
    <scope>DNA-BINDING</scope>
    <scope>INDUCTION BY TP63</scope>
    <scope>MUTAGENESIS OF CYS-27; CYS-30; HIS-39 AND HIS-43</scope>
</reference>
<reference key="6">
    <citation type="journal article" date="2023" name="J. Struct. Biol. X">
        <title>NMR structure verifies the eponymous zinc finger domain of transcription factor ZNF750.</title>
        <authorList>
            <person name="Rua A.J."/>
            <person name="Whitehead R.D."/>
            <person name="Alexandrescu A.T."/>
        </authorList>
    </citation>
    <scope>STRUCTURE BY NMR OF 25-51 IN COMPLEX WITH ZN(2+)</scope>
    <scope>ZINC FINGER</scope>
    <scope>MUTAGENESIS OF CYS-34 AND HIS-39</scope>
</reference>
<feature type="chain" id="PRO_0000247070" description="Zinc finger protein 750">
    <location>
        <begin position="1"/>
        <end position="723"/>
    </location>
</feature>
<feature type="zinc finger region" description="CCHC-type" evidence="4 6">
    <location>
        <begin position="25"/>
        <end position="51"/>
    </location>
</feature>
<feature type="region of interest" description="Disordered" evidence="1">
    <location>
        <begin position="64"/>
        <end position="91"/>
    </location>
</feature>
<feature type="region of interest" description="Disordered" evidence="1">
    <location>
        <begin position="132"/>
        <end position="153"/>
    </location>
</feature>
<feature type="region of interest" description="Disordered" evidence="1">
    <location>
        <begin position="359"/>
        <end position="427"/>
    </location>
</feature>
<feature type="region of interest" description="Disordered" evidence="1">
    <location>
        <begin position="466"/>
        <end position="630"/>
    </location>
</feature>
<feature type="region of interest" description="Disordered" evidence="1">
    <location>
        <begin position="650"/>
        <end position="723"/>
    </location>
</feature>
<feature type="compositionally biased region" description="Polar residues" evidence="1">
    <location>
        <begin position="67"/>
        <end position="91"/>
    </location>
</feature>
<feature type="compositionally biased region" description="Polar residues" evidence="1">
    <location>
        <begin position="360"/>
        <end position="369"/>
    </location>
</feature>
<feature type="compositionally biased region" description="Basic and acidic residues" evidence="1">
    <location>
        <begin position="370"/>
        <end position="397"/>
    </location>
</feature>
<feature type="compositionally biased region" description="Polar residues" evidence="1">
    <location>
        <begin position="470"/>
        <end position="482"/>
    </location>
</feature>
<feature type="compositionally biased region" description="Low complexity" evidence="1">
    <location>
        <begin position="500"/>
        <end position="509"/>
    </location>
</feature>
<feature type="compositionally biased region" description="Polar residues" evidence="1">
    <location>
        <begin position="530"/>
        <end position="545"/>
    </location>
</feature>
<feature type="compositionally biased region" description="Low complexity" evidence="1">
    <location>
        <begin position="563"/>
        <end position="582"/>
    </location>
</feature>
<feature type="compositionally biased region" description="Low complexity" evidence="1">
    <location>
        <begin position="606"/>
        <end position="616"/>
    </location>
</feature>
<feature type="compositionally biased region" description="Polar residues" evidence="1">
    <location>
        <begin position="666"/>
        <end position="678"/>
    </location>
</feature>
<feature type="binding site" evidence="4 6">
    <location>
        <position position="27"/>
    </location>
    <ligand>
        <name>Zn(2+)</name>
        <dbReference type="ChEBI" id="CHEBI:29105"/>
    </ligand>
</feature>
<feature type="binding site" evidence="4 6">
    <location>
        <position position="30"/>
    </location>
    <ligand>
        <name>Zn(2+)</name>
        <dbReference type="ChEBI" id="CHEBI:29105"/>
    </ligand>
</feature>
<feature type="binding site" evidence="4 6">
    <location>
        <position position="43"/>
    </location>
    <ligand>
        <name>Zn(2+)</name>
        <dbReference type="ChEBI" id="CHEBI:29105"/>
    </ligand>
</feature>
<feature type="binding site" evidence="4 6">
    <location>
        <position position="49"/>
    </location>
    <ligand>
        <name>Zn(2+)</name>
        <dbReference type="ChEBI" id="CHEBI:29105"/>
    </ligand>
</feature>
<feature type="sequence variant" id="VAR_027062" description="In dbSNP:rs8074277.">
    <original>M</original>
    <variation>V</variation>
    <location>
        <position position="235"/>
    </location>
</feature>
<feature type="sequence variant" id="VAR_051502" description="In dbSNP:rs35653278.">
    <original>P</original>
    <variation>L</variation>
    <location>
        <position position="288"/>
    </location>
</feature>
<feature type="sequence variant" id="VAR_051503" description="In dbSNP:rs34687659.">
    <original>Q</original>
    <variation>R</variation>
    <location>
        <position position="392"/>
    </location>
</feature>
<feature type="mutagenesis site" description="Abolishes the ability to induce epidermal terminal differentiation; when associated with A-30." evidence="3">
    <original>C</original>
    <variation>A</variation>
    <location>
        <position position="27"/>
    </location>
</feature>
<feature type="mutagenesis site" description="Abolishes the ability to induce epidermal terminal differentiation; when associated with A-27." evidence="3">
    <original>C</original>
    <variation>A</variation>
    <location>
        <position position="30"/>
    </location>
</feature>
<feature type="mutagenesis site" description="Retains the ability to bind zinc; when associated with A-39." evidence="4">
    <original>C</original>
    <variation>A</variation>
    <location>
        <position position="34"/>
    </location>
</feature>
<feature type="mutagenesis site" description="Abolishes the ability to induce epidermal terminal differentiation; when associated with A-43. Retains the ability to bind zinc; when associated with A-34." evidence="3 4">
    <original>H</original>
    <variation>A</variation>
    <location>
        <position position="39"/>
    </location>
</feature>
<feature type="mutagenesis site" description="Abolishes the ability to induce epidermal terminal differentiation; when associated with A-39." evidence="3">
    <original>H</original>
    <variation>A</variation>
    <location>
        <position position="43"/>
    </location>
</feature>
<feature type="sequence conflict" description="In Ref. 1; BAB14718." evidence="5" ref="1">
    <original>A</original>
    <variation>P</variation>
    <location>
        <position position="178"/>
    </location>
</feature>
<feature type="turn" evidence="7">
    <location>
        <begin position="28"/>
        <end position="31"/>
    </location>
</feature>
<feature type="helix" evidence="7">
    <location>
        <begin position="37"/>
        <end position="45"/>
    </location>
</feature>
<name>ZN750_HUMAN</name>
<dbReference type="EMBL" id="AK023903">
    <property type="protein sequence ID" value="BAB14718.1"/>
    <property type="molecule type" value="mRNA"/>
</dbReference>
<dbReference type="EMBL" id="AC068584">
    <property type="status" value="NOT_ANNOTATED_CDS"/>
    <property type="molecule type" value="Genomic_DNA"/>
</dbReference>
<dbReference type="EMBL" id="BC109036">
    <property type="protein sequence ID" value="AAI09037.1"/>
    <property type="molecule type" value="mRNA"/>
</dbReference>
<dbReference type="EMBL" id="BC109037">
    <property type="protein sequence ID" value="AAI09038.1"/>
    <property type="molecule type" value="mRNA"/>
</dbReference>
<dbReference type="CCDS" id="CCDS11819.1"/>
<dbReference type="RefSeq" id="NP_078978.2">
    <property type="nucleotide sequence ID" value="NM_024702.3"/>
</dbReference>
<dbReference type="PDB" id="8SXM">
    <property type="method" value="NMR"/>
    <property type="chains" value="A=25-51"/>
</dbReference>
<dbReference type="PDBsum" id="8SXM"/>
<dbReference type="SMR" id="Q32MQ0"/>
<dbReference type="BioGRID" id="122866">
    <property type="interactions" value="27"/>
</dbReference>
<dbReference type="FunCoup" id="Q32MQ0">
    <property type="interactions" value="687"/>
</dbReference>
<dbReference type="IntAct" id="Q32MQ0">
    <property type="interactions" value="1"/>
</dbReference>
<dbReference type="STRING" id="9606.ENSP00000269394"/>
<dbReference type="GlyGen" id="Q32MQ0">
    <property type="glycosylation" value="2 sites, 1 O-linked glycan (1 site)"/>
</dbReference>
<dbReference type="iPTMnet" id="Q32MQ0"/>
<dbReference type="PhosphoSitePlus" id="Q32MQ0"/>
<dbReference type="BioMuta" id="ZNF750"/>
<dbReference type="DMDM" id="110825759"/>
<dbReference type="jPOST" id="Q32MQ0"/>
<dbReference type="MassIVE" id="Q32MQ0"/>
<dbReference type="PaxDb" id="9606-ENSP00000269394"/>
<dbReference type="PeptideAtlas" id="Q32MQ0"/>
<dbReference type="ProteomicsDB" id="61608"/>
<dbReference type="Antibodypedia" id="19924">
    <property type="antibodies" value="112 antibodies from 26 providers"/>
</dbReference>
<dbReference type="DNASU" id="79755"/>
<dbReference type="Ensembl" id="ENST00000269394.4">
    <property type="protein sequence ID" value="ENSP00000269394.3"/>
    <property type="gene ID" value="ENSG00000141579.7"/>
</dbReference>
<dbReference type="GeneID" id="79755"/>
<dbReference type="KEGG" id="hsa:79755"/>
<dbReference type="MANE-Select" id="ENST00000269394.4">
    <property type="protein sequence ID" value="ENSP00000269394.3"/>
    <property type="RefSeq nucleotide sequence ID" value="NM_024702.3"/>
    <property type="RefSeq protein sequence ID" value="NP_078978.2"/>
</dbReference>
<dbReference type="UCSC" id="uc002kga.4">
    <property type="organism name" value="human"/>
</dbReference>
<dbReference type="AGR" id="HGNC:25843"/>
<dbReference type="CTD" id="79755"/>
<dbReference type="DisGeNET" id="79755"/>
<dbReference type="GeneCards" id="ZNF750"/>
<dbReference type="HGNC" id="HGNC:25843">
    <property type="gene designation" value="ZNF750"/>
</dbReference>
<dbReference type="HPA" id="ENSG00000141579">
    <property type="expression patterns" value="Tissue enhanced (esophagus, skin, vagina)"/>
</dbReference>
<dbReference type="MalaCards" id="ZNF750"/>
<dbReference type="MIM" id="610226">
    <property type="type" value="gene"/>
</dbReference>
<dbReference type="MIM" id="610227">
    <property type="type" value="phenotype"/>
</dbReference>
<dbReference type="neXtProt" id="NX_Q32MQ0"/>
<dbReference type="OpenTargets" id="ENSG00000141579"/>
<dbReference type="Orphanet" id="168606">
    <property type="disease" value="Seborrhea-like dermatitis with psoriasiform elements"/>
</dbReference>
<dbReference type="PharmGKB" id="PA145149939"/>
<dbReference type="VEuPathDB" id="HostDB:ENSG00000141579"/>
<dbReference type="eggNOG" id="ENOG502QU7X">
    <property type="taxonomic scope" value="Eukaryota"/>
</dbReference>
<dbReference type="GeneTree" id="ENSGT00530000063870"/>
<dbReference type="HOGENOM" id="CLU_023455_0_0_1"/>
<dbReference type="InParanoid" id="Q32MQ0"/>
<dbReference type="OMA" id="PSAYDHY"/>
<dbReference type="OrthoDB" id="8933073at2759"/>
<dbReference type="PAN-GO" id="Q32MQ0">
    <property type="GO annotations" value="6 GO annotations based on evolutionary models"/>
</dbReference>
<dbReference type="PhylomeDB" id="Q32MQ0"/>
<dbReference type="TreeFam" id="TF331381"/>
<dbReference type="PathwayCommons" id="Q32MQ0"/>
<dbReference type="Reactome" id="R-HSA-212436">
    <property type="pathway name" value="Generic Transcription Pathway"/>
</dbReference>
<dbReference type="SignaLink" id="Q32MQ0"/>
<dbReference type="BioGRID-ORCS" id="79755">
    <property type="hits" value="11 hits in 1144 CRISPR screens"/>
</dbReference>
<dbReference type="ChiTaRS" id="ZNF750">
    <property type="organism name" value="human"/>
</dbReference>
<dbReference type="GenomeRNAi" id="79755"/>
<dbReference type="Pharos" id="Q32MQ0">
    <property type="development level" value="Tbio"/>
</dbReference>
<dbReference type="PRO" id="PR:Q32MQ0"/>
<dbReference type="Proteomes" id="UP000005640">
    <property type="component" value="Chromosome 17"/>
</dbReference>
<dbReference type="RNAct" id="Q32MQ0">
    <property type="molecule type" value="protein"/>
</dbReference>
<dbReference type="Bgee" id="ENSG00000141579">
    <property type="expression patterns" value="Expressed in oral cavity and 129 other cell types or tissues"/>
</dbReference>
<dbReference type="ExpressionAtlas" id="Q32MQ0">
    <property type="expression patterns" value="baseline and differential"/>
</dbReference>
<dbReference type="GO" id="GO:0005634">
    <property type="term" value="C:nucleus"/>
    <property type="evidence" value="ECO:0000314"/>
    <property type="project" value="UniProtKB"/>
</dbReference>
<dbReference type="GO" id="GO:0001228">
    <property type="term" value="F:DNA-binding transcription activator activity, RNA polymerase II-specific"/>
    <property type="evidence" value="ECO:0000314"/>
    <property type="project" value="UniProtKB"/>
</dbReference>
<dbReference type="GO" id="GO:0001227">
    <property type="term" value="F:DNA-binding transcription repressor activity, RNA polymerase II-specific"/>
    <property type="evidence" value="ECO:0000314"/>
    <property type="project" value="ARUK-UCL"/>
</dbReference>
<dbReference type="GO" id="GO:1990841">
    <property type="term" value="F:promoter-specific chromatin binding"/>
    <property type="evidence" value="ECO:0000314"/>
    <property type="project" value="UniProtKB"/>
</dbReference>
<dbReference type="GO" id="GO:0000978">
    <property type="term" value="F:RNA polymerase II cis-regulatory region sequence-specific DNA binding"/>
    <property type="evidence" value="ECO:0000314"/>
    <property type="project" value="UniProtKB"/>
</dbReference>
<dbReference type="GO" id="GO:0008270">
    <property type="term" value="F:zinc ion binding"/>
    <property type="evidence" value="ECO:0007669"/>
    <property type="project" value="UniProtKB-KW"/>
</dbReference>
<dbReference type="GO" id="GO:0030154">
    <property type="term" value="P:cell differentiation"/>
    <property type="evidence" value="ECO:0007669"/>
    <property type="project" value="UniProtKB-KW"/>
</dbReference>
<dbReference type="GO" id="GO:0008544">
    <property type="term" value="P:epidermis development"/>
    <property type="evidence" value="ECO:0000315"/>
    <property type="project" value="UniProtKB"/>
</dbReference>
<dbReference type="GO" id="GO:0061436">
    <property type="term" value="P:establishment of skin barrier"/>
    <property type="evidence" value="ECO:0007669"/>
    <property type="project" value="Ensembl"/>
</dbReference>
<dbReference type="GO" id="GO:0044091">
    <property type="term" value="P:membrane biogenesis"/>
    <property type="evidence" value="ECO:0007669"/>
    <property type="project" value="Ensembl"/>
</dbReference>
<dbReference type="GO" id="GO:0010719">
    <property type="term" value="P:negative regulation of epithelial to mesenchymal transition"/>
    <property type="evidence" value="ECO:0000315"/>
    <property type="project" value="ARUK-UCL"/>
</dbReference>
<dbReference type="GO" id="GO:0000122">
    <property type="term" value="P:negative regulation of transcription by RNA polymerase II"/>
    <property type="evidence" value="ECO:0000314"/>
    <property type="project" value="ARUK-UCL"/>
</dbReference>
<dbReference type="GO" id="GO:2000304">
    <property type="term" value="P:positive regulation of ceramide biosynthetic process"/>
    <property type="evidence" value="ECO:0007669"/>
    <property type="project" value="Ensembl"/>
</dbReference>
<dbReference type="GO" id="GO:0010628">
    <property type="term" value="P:positive regulation of gene expression"/>
    <property type="evidence" value="ECO:0007669"/>
    <property type="project" value="Ensembl"/>
</dbReference>
<dbReference type="GO" id="GO:0045944">
    <property type="term" value="P:positive regulation of transcription by RNA polymerase II"/>
    <property type="evidence" value="ECO:0000314"/>
    <property type="project" value="UniProtKB"/>
</dbReference>
<dbReference type="InterPro" id="IPR039363">
    <property type="entry name" value="ZNF750"/>
</dbReference>
<dbReference type="InterPro" id="IPR039064">
    <property type="entry name" value="ZNF750_Znf"/>
</dbReference>
<dbReference type="PANTHER" id="PTHR14678">
    <property type="entry name" value="PROLINE-RICH PROTEIN 35-RELATED"/>
    <property type="match status" value="1"/>
</dbReference>
<dbReference type="PANTHER" id="PTHR14678:SF1">
    <property type="entry name" value="ZINC FINGER PROTEIN 750"/>
    <property type="match status" value="1"/>
</dbReference>
<dbReference type="Pfam" id="PF15269">
    <property type="entry name" value="zf-C2H2_7"/>
    <property type="match status" value="1"/>
</dbReference>
<organism>
    <name type="scientific">Homo sapiens</name>
    <name type="common">Human</name>
    <dbReference type="NCBI Taxonomy" id="9606"/>
    <lineage>
        <taxon>Eukaryota</taxon>
        <taxon>Metazoa</taxon>
        <taxon>Chordata</taxon>
        <taxon>Craniata</taxon>
        <taxon>Vertebrata</taxon>
        <taxon>Euteleostomi</taxon>
        <taxon>Mammalia</taxon>
        <taxon>Eutheria</taxon>
        <taxon>Euarchontoglires</taxon>
        <taxon>Primates</taxon>
        <taxon>Haplorrhini</taxon>
        <taxon>Catarrhini</taxon>
        <taxon>Hominidae</taxon>
        <taxon>Homo</taxon>
    </lineage>
</organism>
<gene>
    <name type="primary">ZNF750</name>
</gene>
<evidence type="ECO:0000256" key="1">
    <source>
        <dbReference type="SAM" id="MobiDB-lite"/>
    </source>
</evidence>
<evidence type="ECO:0000269" key="2">
    <source>
    </source>
</evidence>
<evidence type="ECO:0000269" key="3">
    <source>
    </source>
</evidence>
<evidence type="ECO:0000269" key="4">
    <source>
    </source>
</evidence>
<evidence type="ECO:0000305" key="5"/>
<evidence type="ECO:0007744" key="6">
    <source>
        <dbReference type="PDB" id="8SXM"/>
    </source>
</evidence>
<evidence type="ECO:0007829" key="7">
    <source>
        <dbReference type="PDB" id="8SXM"/>
    </source>
</evidence>